<keyword id="KW-1185">Reference proteome</keyword>
<protein>
    <recommendedName>
        <fullName>Coiled-coil and C2 domain-containing protein 1-like</fullName>
    </recommendedName>
</protein>
<name>C2D1_CAEEL</name>
<comment type="similarity">
    <text evidence="3">Belongs to the CC2D1 family.</text>
</comment>
<proteinExistence type="inferred from homology"/>
<evidence type="ECO:0000255" key="1">
    <source>
        <dbReference type="PROSITE-ProRule" id="PRU00041"/>
    </source>
</evidence>
<evidence type="ECO:0000256" key="2">
    <source>
        <dbReference type="SAM" id="MobiDB-lite"/>
    </source>
</evidence>
<evidence type="ECO:0000305" key="3"/>
<evidence type="ECO:0000312" key="4">
    <source>
        <dbReference type="WormBase" id="Y37H9A.3"/>
    </source>
</evidence>
<gene>
    <name evidence="4" type="primary">ccct-1</name>
    <name evidence="4" type="ORF">Y37H9A.3</name>
</gene>
<feature type="chain" id="PRO_0000288432" description="Coiled-coil and C2 domain-containing protein 1-like">
    <location>
        <begin position="1"/>
        <end position="781"/>
    </location>
</feature>
<feature type="domain" description="C2" evidence="1">
    <location>
        <begin position="605"/>
        <end position="741"/>
    </location>
</feature>
<feature type="region of interest" description="Disordered" evidence="2">
    <location>
        <begin position="32"/>
        <end position="63"/>
    </location>
</feature>
<feature type="region of interest" description="Disordered" evidence="2">
    <location>
        <begin position="94"/>
        <end position="134"/>
    </location>
</feature>
<feature type="region of interest" description="Disordered" evidence="2">
    <location>
        <begin position="187"/>
        <end position="296"/>
    </location>
</feature>
<feature type="region of interest" description="Disordered" evidence="2">
    <location>
        <begin position="313"/>
        <end position="373"/>
    </location>
</feature>
<feature type="region of interest" description="Disordered" evidence="2">
    <location>
        <begin position="403"/>
        <end position="447"/>
    </location>
</feature>
<feature type="compositionally biased region" description="Low complexity" evidence="2">
    <location>
        <begin position="37"/>
        <end position="59"/>
    </location>
</feature>
<feature type="compositionally biased region" description="Gly residues" evidence="2">
    <location>
        <begin position="98"/>
        <end position="107"/>
    </location>
</feature>
<feature type="compositionally biased region" description="Low complexity" evidence="2">
    <location>
        <begin position="108"/>
        <end position="118"/>
    </location>
</feature>
<feature type="compositionally biased region" description="Pro residues" evidence="2">
    <location>
        <begin position="119"/>
        <end position="129"/>
    </location>
</feature>
<feature type="compositionally biased region" description="Pro residues" evidence="2">
    <location>
        <begin position="204"/>
        <end position="222"/>
    </location>
</feature>
<feature type="compositionally biased region" description="Low complexity" evidence="2">
    <location>
        <begin position="244"/>
        <end position="256"/>
    </location>
</feature>
<feature type="compositionally biased region" description="Basic residues" evidence="2">
    <location>
        <begin position="269"/>
        <end position="280"/>
    </location>
</feature>
<feature type="compositionally biased region" description="Basic and acidic residues" evidence="2">
    <location>
        <begin position="285"/>
        <end position="296"/>
    </location>
</feature>
<feature type="compositionally biased region" description="Pro residues" evidence="2">
    <location>
        <begin position="324"/>
        <end position="341"/>
    </location>
</feature>
<feature type="compositionally biased region" description="Basic and acidic residues" evidence="2">
    <location>
        <begin position="363"/>
        <end position="373"/>
    </location>
</feature>
<reference key="1">
    <citation type="journal article" date="1998" name="Science">
        <title>Genome sequence of the nematode C. elegans: a platform for investigating biology.</title>
        <authorList>
            <consortium name="The C. elegans sequencing consortium"/>
        </authorList>
    </citation>
    <scope>NUCLEOTIDE SEQUENCE [LARGE SCALE GENOMIC DNA]</scope>
    <source>
        <strain>Bristol N2</strain>
    </source>
</reference>
<dbReference type="EMBL" id="BX284601">
    <property type="protein sequence ID" value="CAB63350.2"/>
    <property type="molecule type" value="Genomic_DNA"/>
</dbReference>
<dbReference type="RefSeq" id="NP_493412.2">
    <property type="nucleotide sequence ID" value="NM_061011.2"/>
</dbReference>
<dbReference type="SMR" id="Q9U2M8"/>
<dbReference type="BioGRID" id="38637">
    <property type="interactions" value="10"/>
</dbReference>
<dbReference type="DIP" id="DIP-25514N"/>
<dbReference type="FunCoup" id="Q9U2M8">
    <property type="interactions" value="2319"/>
</dbReference>
<dbReference type="IntAct" id="Q9U2M8">
    <property type="interactions" value="5"/>
</dbReference>
<dbReference type="STRING" id="6239.Y37H9A.3.1"/>
<dbReference type="iPTMnet" id="Q9U2M8"/>
<dbReference type="PaxDb" id="6239-Y37H9A.3"/>
<dbReference type="PeptideAtlas" id="Q9U2M8"/>
<dbReference type="EnsemblMetazoa" id="Y37H9A.3.1">
    <property type="protein sequence ID" value="Y37H9A.3.1"/>
    <property type="gene ID" value="WBGene00012578"/>
</dbReference>
<dbReference type="UCSC" id="Y37H9A.3">
    <property type="organism name" value="c. elegans"/>
</dbReference>
<dbReference type="AGR" id="WB:WBGene00012578"/>
<dbReference type="WormBase" id="Y37H9A.3">
    <property type="protein sequence ID" value="CE53023"/>
    <property type="gene ID" value="WBGene00012578"/>
    <property type="gene designation" value="ccct-1"/>
</dbReference>
<dbReference type="eggNOG" id="KOG3837">
    <property type="taxonomic scope" value="Eukaryota"/>
</dbReference>
<dbReference type="GeneTree" id="ENSGT00390000009595"/>
<dbReference type="HOGENOM" id="CLU_008808_1_0_1"/>
<dbReference type="InParanoid" id="Q9U2M8"/>
<dbReference type="OrthoDB" id="19996at2759"/>
<dbReference type="PhylomeDB" id="Q9U2M8"/>
<dbReference type="Reactome" id="R-CEL-9668328">
    <property type="pathway name" value="Sealing of the nuclear envelope (NE) by ESCRT-III"/>
</dbReference>
<dbReference type="PRO" id="PR:Q9U2M8"/>
<dbReference type="Proteomes" id="UP000001940">
    <property type="component" value="Chromosome I"/>
</dbReference>
<dbReference type="Bgee" id="WBGene00012578">
    <property type="expression patterns" value="Expressed in germ line (C elegans) and 4 other cell types or tissues"/>
</dbReference>
<dbReference type="GO" id="GO:0005634">
    <property type="term" value="C:nucleus"/>
    <property type="evidence" value="ECO:0000318"/>
    <property type="project" value="GO_Central"/>
</dbReference>
<dbReference type="GO" id="GO:0000981">
    <property type="term" value="F:DNA-binding transcription factor activity, RNA polymerase II-specific"/>
    <property type="evidence" value="ECO:0000318"/>
    <property type="project" value="GO_Central"/>
</dbReference>
<dbReference type="GO" id="GO:0001227">
    <property type="term" value="F:DNA-binding transcription repressor activity, RNA polymerase II-specific"/>
    <property type="evidence" value="ECO:0007669"/>
    <property type="project" value="InterPro"/>
</dbReference>
<dbReference type="GO" id="GO:0000978">
    <property type="term" value="F:RNA polymerase II cis-regulatory region sequence-specific DNA binding"/>
    <property type="evidence" value="ECO:0000318"/>
    <property type="project" value="GO_Central"/>
</dbReference>
<dbReference type="GO" id="GO:0006357">
    <property type="term" value="P:regulation of transcription by RNA polymerase II"/>
    <property type="evidence" value="ECO:0000318"/>
    <property type="project" value="GO_Central"/>
</dbReference>
<dbReference type="CDD" id="cd08690">
    <property type="entry name" value="C2_Freud-1"/>
    <property type="match status" value="1"/>
</dbReference>
<dbReference type="FunFam" id="2.60.40.150:FF:000319">
    <property type="entry name" value="Coiled-coil and C2 domain-containing protein 1-like"/>
    <property type="match status" value="1"/>
</dbReference>
<dbReference type="Gene3D" id="2.60.40.150">
    <property type="entry name" value="C2 domain"/>
    <property type="match status" value="1"/>
</dbReference>
<dbReference type="InterPro" id="IPR000008">
    <property type="entry name" value="C2_dom"/>
</dbReference>
<dbReference type="InterPro" id="IPR035892">
    <property type="entry name" value="C2_domain_sf"/>
</dbReference>
<dbReference type="InterPro" id="IPR037772">
    <property type="entry name" value="C2_Freud"/>
</dbReference>
<dbReference type="InterPro" id="IPR039725">
    <property type="entry name" value="CC2D1A/B"/>
</dbReference>
<dbReference type="InterPro" id="IPR006608">
    <property type="entry name" value="CC2D1A/B_DM14"/>
</dbReference>
<dbReference type="PANTHER" id="PTHR13076">
    <property type="entry name" value="COILED-COIL AND C2 DOMAIN-CONTAINING PROTEIN 1-LIKE"/>
    <property type="match status" value="1"/>
</dbReference>
<dbReference type="PANTHER" id="PTHR13076:SF9">
    <property type="entry name" value="COILED-COIL AND C2 DOMAIN-CONTAINING PROTEIN 1-LIKE"/>
    <property type="match status" value="1"/>
</dbReference>
<dbReference type="Pfam" id="PF00168">
    <property type="entry name" value="C2"/>
    <property type="match status" value="1"/>
</dbReference>
<dbReference type="Pfam" id="PF21528">
    <property type="entry name" value="CC2D1A-B_DM14"/>
    <property type="match status" value="2"/>
</dbReference>
<dbReference type="SMART" id="SM00239">
    <property type="entry name" value="C2"/>
    <property type="match status" value="1"/>
</dbReference>
<dbReference type="SMART" id="SM00685">
    <property type="entry name" value="DM14"/>
    <property type="match status" value="3"/>
</dbReference>
<dbReference type="SUPFAM" id="SSF49562">
    <property type="entry name" value="C2 domain (Calcium/lipid-binding domain, CaLB)"/>
    <property type="match status" value="1"/>
</dbReference>
<dbReference type="PROSITE" id="PS50004">
    <property type="entry name" value="C2"/>
    <property type="match status" value="1"/>
</dbReference>
<accession>Q9U2M8</accession>
<organism>
    <name type="scientific">Caenorhabditis elegans</name>
    <dbReference type="NCBI Taxonomy" id="6239"/>
    <lineage>
        <taxon>Eukaryota</taxon>
        <taxon>Metazoa</taxon>
        <taxon>Ecdysozoa</taxon>
        <taxon>Nematoda</taxon>
        <taxon>Chromadorea</taxon>
        <taxon>Rhabditida</taxon>
        <taxon>Rhabditina</taxon>
        <taxon>Rhabditomorpha</taxon>
        <taxon>Rhabditoidea</taxon>
        <taxon>Rhabditidae</taxon>
        <taxon>Peloderinae</taxon>
        <taxon>Caenorhabditis</taxon>
    </lineage>
</organism>
<sequence>MNFNDIDNQMYGNLEEDAELLAELAAIQEEEMGRVSRPAAPARGAPPAARGRPAPAAPANVPGLDPRLLAAALADNHGDGGDEELEMDEDLLNELNGLVGGGGGGGAAPTVPTRAAPRAPGPSGPPPSASAPNSQLGHLKQLHVYYMKAHKSAEQAGEGPKARRYKRAVDKLVELIRAVERGKTIDESEIPVAPPNFSSAAAEPLPPPAPTAQPAHHPPAPPIRQAAHAAESSPPPIPQRKSSAPAPTAAAPPATKEPTDPKKAAIYRILHHRRDLHKQNARAAIADKDKESAKESVEMAKAFDQAIAALNECSADEMDMNDVPPSPPPYRKPAPPQPQAPPTSAGPLGFIEELQQRQQRFQKMAEKAKTEGNERKMKMNMRLAGQFDEAIKEAKRGKLVNVGELPSLPDMGPLPPQTAPGQAAPKLHQRPPPQEVGPLAPSGVEGKSRNQGQLEFLLERQAQFKQAAIHAKSRGDVEAAKKYLVEMKGFDKMIQAAQAGLPVSIKATPIPPQAQTASTTLQPRIQSAAASSSTGVENRGEKLSLLEKTLIEQVRSAETNQMRFTRLGDVGKVRLFEGWGKVAKQDLLLVREVAKRGLQVPKFHYEMRQIPSADLFPDLADDVIELTIVSCRDVPLPSGYETHHANLFIKYTFPAVVNDLPQTGKTKLIAGTASPDFGESIMLNIGSGKSRNSKLQRTFKRGGLKFEVFQKGGFMRSDKLLGTCEWKLEKLEHSAEMEESLPLKDGRKAVGGLLSAKVRIRQPIGDAKAQHIAQKWLILDN</sequence>